<proteinExistence type="inferred from homology"/>
<dbReference type="EC" id="3.1.2.6" evidence="1"/>
<dbReference type="EMBL" id="CP000362">
    <property type="protein sequence ID" value="ABG33020.1"/>
    <property type="molecule type" value="Genomic_DNA"/>
</dbReference>
<dbReference type="RefSeq" id="WP_011569633.1">
    <property type="nucleotide sequence ID" value="NC_008209.1"/>
</dbReference>
<dbReference type="SMR" id="Q162S3"/>
<dbReference type="STRING" id="375451.RD1_3539"/>
<dbReference type="KEGG" id="rde:RD1_3539"/>
<dbReference type="eggNOG" id="COG0491">
    <property type="taxonomic scope" value="Bacteria"/>
</dbReference>
<dbReference type="HOGENOM" id="CLU_030571_4_1_5"/>
<dbReference type="UniPathway" id="UPA00619">
    <property type="reaction ID" value="UER00676"/>
</dbReference>
<dbReference type="Proteomes" id="UP000007029">
    <property type="component" value="Chromosome"/>
</dbReference>
<dbReference type="GO" id="GO:0004416">
    <property type="term" value="F:hydroxyacylglutathione hydrolase activity"/>
    <property type="evidence" value="ECO:0007669"/>
    <property type="project" value="UniProtKB-UniRule"/>
</dbReference>
<dbReference type="GO" id="GO:0046872">
    <property type="term" value="F:metal ion binding"/>
    <property type="evidence" value="ECO:0007669"/>
    <property type="project" value="UniProtKB-KW"/>
</dbReference>
<dbReference type="GO" id="GO:0019243">
    <property type="term" value="P:methylglyoxal catabolic process to D-lactate via S-lactoyl-glutathione"/>
    <property type="evidence" value="ECO:0007669"/>
    <property type="project" value="InterPro"/>
</dbReference>
<dbReference type="CDD" id="cd07723">
    <property type="entry name" value="hydroxyacylglutathione_hydrolase_MBL-fold"/>
    <property type="match status" value="1"/>
</dbReference>
<dbReference type="Gene3D" id="3.60.15.10">
    <property type="entry name" value="Ribonuclease Z/Hydroxyacylglutathione hydrolase-like"/>
    <property type="match status" value="1"/>
</dbReference>
<dbReference type="HAMAP" id="MF_01374">
    <property type="entry name" value="Glyoxalase_2"/>
    <property type="match status" value="1"/>
</dbReference>
<dbReference type="InterPro" id="IPR035680">
    <property type="entry name" value="Clx_II_MBL"/>
</dbReference>
<dbReference type="InterPro" id="IPR050110">
    <property type="entry name" value="Glyoxalase_II_hydrolase"/>
</dbReference>
<dbReference type="InterPro" id="IPR032282">
    <property type="entry name" value="HAGH_C"/>
</dbReference>
<dbReference type="InterPro" id="IPR017782">
    <property type="entry name" value="Hydroxyacylglutathione_Hdrlase"/>
</dbReference>
<dbReference type="InterPro" id="IPR001279">
    <property type="entry name" value="Metallo-B-lactamas"/>
</dbReference>
<dbReference type="InterPro" id="IPR036866">
    <property type="entry name" value="RibonucZ/Hydroxyglut_hydro"/>
</dbReference>
<dbReference type="NCBIfam" id="TIGR03413">
    <property type="entry name" value="GSH_gloB"/>
    <property type="match status" value="1"/>
</dbReference>
<dbReference type="PANTHER" id="PTHR43705">
    <property type="entry name" value="HYDROXYACYLGLUTATHIONE HYDROLASE"/>
    <property type="match status" value="1"/>
</dbReference>
<dbReference type="PANTHER" id="PTHR43705:SF1">
    <property type="entry name" value="HYDROXYACYLGLUTATHIONE HYDROLASE GLOB"/>
    <property type="match status" value="1"/>
</dbReference>
<dbReference type="Pfam" id="PF16123">
    <property type="entry name" value="HAGH_C"/>
    <property type="match status" value="1"/>
</dbReference>
<dbReference type="Pfam" id="PF00753">
    <property type="entry name" value="Lactamase_B"/>
    <property type="match status" value="1"/>
</dbReference>
<dbReference type="PIRSF" id="PIRSF005457">
    <property type="entry name" value="Glx"/>
    <property type="match status" value="1"/>
</dbReference>
<dbReference type="SMART" id="SM00849">
    <property type="entry name" value="Lactamase_B"/>
    <property type="match status" value="1"/>
</dbReference>
<dbReference type="SUPFAM" id="SSF56281">
    <property type="entry name" value="Metallo-hydrolase/oxidoreductase"/>
    <property type="match status" value="1"/>
</dbReference>
<keyword id="KW-0378">Hydrolase</keyword>
<keyword id="KW-0479">Metal-binding</keyword>
<keyword id="KW-1185">Reference proteome</keyword>
<keyword id="KW-0862">Zinc</keyword>
<evidence type="ECO:0000255" key="1">
    <source>
        <dbReference type="HAMAP-Rule" id="MF_01374"/>
    </source>
</evidence>
<gene>
    <name evidence="1" type="primary">gloB</name>
    <name type="ordered locus">RD1_3539</name>
</gene>
<organism>
    <name type="scientific">Roseobacter denitrificans (strain ATCC 33942 / OCh 114)</name>
    <name type="common">Erythrobacter sp. (strain OCh 114)</name>
    <name type="synonym">Roseobacter denitrificans</name>
    <dbReference type="NCBI Taxonomy" id="375451"/>
    <lineage>
        <taxon>Bacteria</taxon>
        <taxon>Pseudomonadati</taxon>
        <taxon>Pseudomonadota</taxon>
        <taxon>Alphaproteobacteria</taxon>
        <taxon>Rhodobacterales</taxon>
        <taxon>Roseobacteraceae</taxon>
        <taxon>Roseobacter</taxon>
    </lineage>
</organism>
<accession>Q162S3</accession>
<reference key="1">
    <citation type="journal article" date="2007" name="J. Bacteriol.">
        <title>The complete genome sequence of Roseobacter denitrificans reveals a mixotrophic rather than photosynthetic metabolism.</title>
        <authorList>
            <person name="Swingley W.D."/>
            <person name="Sadekar S."/>
            <person name="Mastrian S.D."/>
            <person name="Matthies H.J."/>
            <person name="Hao J."/>
            <person name="Ramos H."/>
            <person name="Acharya C.R."/>
            <person name="Conrad A.L."/>
            <person name="Taylor H.L."/>
            <person name="Dejesa L.C."/>
            <person name="Shah M.K."/>
            <person name="O'Huallachain M.E."/>
            <person name="Lince M.T."/>
            <person name="Blankenship R.E."/>
            <person name="Beatty J.T."/>
            <person name="Touchman J.W."/>
        </authorList>
    </citation>
    <scope>NUCLEOTIDE SEQUENCE [LARGE SCALE GENOMIC DNA]</scope>
    <source>
        <strain>ATCC 33942 / OCh 114</strain>
    </source>
</reference>
<sequence length="255" mass="27523">MPIEILTIPCLNDNYAFLVHDTATGQTALIDVPEAAPILKVLAERTWQLSEVWITHHHADHVQGLGDILSAHPAQVRGAARDAHRLPALDVELRDGESFDFAGHKVDVMDVSGHTVGHIAYYCADAKAVFTADSLMALGCGRLFEGTADQMWDSLSKLAALPSETQVYSGHEYTAANARFALTIDPHNPDLISRSEGITAARAAAKPTVPSTLATEAATNPFLRAADPAIRAHLNMQHASDSEVFAEIRARKDAF</sequence>
<feature type="chain" id="PRO_0000309699" description="Hydroxyacylglutathione hydrolase">
    <location>
        <begin position="1"/>
        <end position="255"/>
    </location>
</feature>
<feature type="binding site" evidence="1">
    <location>
        <position position="56"/>
    </location>
    <ligand>
        <name>Zn(2+)</name>
        <dbReference type="ChEBI" id="CHEBI:29105"/>
        <label>1</label>
    </ligand>
</feature>
<feature type="binding site" evidence="1">
    <location>
        <position position="58"/>
    </location>
    <ligand>
        <name>Zn(2+)</name>
        <dbReference type="ChEBI" id="CHEBI:29105"/>
        <label>1</label>
    </ligand>
</feature>
<feature type="binding site" evidence="1">
    <location>
        <position position="60"/>
    </location>
    <ligand>
        <name>Zn(2+)</name>
        <dbReference type="ChEBI" id="CHEBI:29105"/>
        <label>2</label>
    </ligand>
</feature>
<feature type="binding site" evidence="1">
    <location>
        <position position="61"/>
    </location>
    <ligand>
        <name>Zn(2+)</name>
        <dbReference type="ChEBI" id="CHEBI:29105"/>
        <label>2</label>
    </ligand>
</feature>
<feature type="binding site" evidence="1">
    <location>
        <position position="114"/>
    </location>
    <ligand>
        <name>Zn(2+)</name>
        <dbReference type="ChEBI" id="CHEBI:29105"/>
        <label>1</label>
    </ligand>
</feature>
<feature type="binding site" evidence="1">
    <location>
        <position position="133"/>
    </location>
    <ligand>
        <name>Zn(2+)</name>
        <dbReference type="ChEBI" id="CHEBI:29105"/>
        <label>1</label>
    </ligand>
</feature>
<feature type="binding site" evidence="1">
    <location>
        <position position="133"/>
    </location>
    <ligand>
        <name>Zn(2+)</name>
        <dbReference type="ChEBI" id="CHEBI:29105"/>
        <label>2</label>
    </ligand>
</feature>
<feature type="binding site" evidence="1">
    <location>
        <position position="171"/>
    </location>
    <ligand>
        <name>Zn(2+)</name>
        <dbReference type="ChEBI" id="CHEBI:29105"/>
        <label>2</label>
    </ligand>
</feature>
<name>GLO2_ROSDO</name>
<comment type="function">
    <text evidence="1">Thiolesterase that catalyzes the hydrolysis of S-D-lactoyl-glutathione to form glutathione and D-lactic acid.</text>
</comment>
<comment type="catalytic activity">
    <reaction evidence="1">
        <text>an S-(2-hydroxyacyl)glutathione + H2O = a 2-hydroxy carboxylate + glutathione + H(+)</text>
        <dbReference type="Rhea" id="RHEA:21864"/>
        <dbReference type="ChEBI" id="CHEBI:15377"/>
        <dbReference type="ChEBI" id="CHEBI:15378"/>
        <dbReference type="ChEBI" id="CHEBI:57925"/>
        <dbReference type="ChEBI" id="CHEBI:58896"/>
        <dbReference type="ChEBI" id="CHEBI:71261"/>
        <dbReference type="EC" id="3.1.2.6"/>
    </reaction>
</comment>
<comment type="cofactor">
    <cofactor evidence="1">
        <name>Zn(2+)</name>
        <dbReference type="ChEBI" id="CHEBI:29105"/>
    </cofactor>
    <text evidence="1">Binds 2 Zn(2+) ions per subunit.</text>
</comment>
<comment type="pathway">
    <text evidence="1">Secondary metabolite metabolism; methylglyoxal degradation; (R)-lactate from methylglyoxal: step 2/2.</text>
</comment>
<comment type="subunit">
    <text evidence="1">Monomer.</text>
</comment>
<comment type="similarity">
    <text evidence="1">Belongs to the metallo-beta-lactamase superfamily. Glyoxalase II family.</text>
</comment>
<protein>
    <recommendedName>
        <fullName evidence="1">Hydroxyacylglutathione hydrolase</fullName>
        <ecNumber evidence="1">3.1.2.6</ecNumber>
    </recommendedName>
    <alternativeName>
        <fullName evidence="1">Glyoxalase II</fullName>
        <shortName evidence="1">Glx II</shortName>
    </alternativeName>
</protein>